<feature type="chain" id="PRO_0000385630" description="Leucine-rich repeat protein soc-2">
    <location>
        <begin position="1"/>
        <end position="559"/>
    </location>
</feature>
<feature type="repeat" description="LRR 1">
    <location>
        <begin position="74"/>
        <end position="95"/>
    </location>
</feature>
<feature type="repeat" description="LRR 2">
    <location>
        <begin position="97"/>
        <end position="118"/>
    </location>
</feature>
<feature type="repeat" description="LRR 3">
    <location>
        <begin position="120"/>
        <end position="141"/>
    </location>
</feature>
<feature type="repeat" description="LRR 4">
    <location>
        <begin position="143"/>
        <end position="164"/>
    </location>
</feature>
<feature type="repeat" description="LRR 5">
    <location>
        <begin position="166"/>
        <end position="187"/>
    </location>
</feature>
<feature type="repeat" description="LRR 6">
    <location>
        <begin position="189"/>
        <end position="210"/>
    </location>
</feature>
<feature type="repeat" description="LRR 7">
    <location>
        <begin position="212"/>
        <end position="233"/>
    </location>
</feature>
<feature type="repeat" description="LRR 8">
    <location>
        <begin position="235"/>
        <end position="257"/>
    </location>
</feature>
<feature type="repeat" description="LRR 9">
    <location>
        <begin position="258"/>
        <end position="279"/>
    </location>
</feature>
<feature type="repeat" description="LRR 10">
    <location>
        <begin position="281"/>
        <end position="302"/>
    </location>
</feature>
<feature type="repeat" description="LRR 11">
    <location>
        <begin position="305"/>
        <end position="326"/>
    </location>
</feature>
<feature type="repeat" description="LRR 12">
    <location>
        <begin position="329"/>
        <end position="350"/>
    </location>
</feature>
<feature type="repeat" description="LRR 13">
    <location>
        <begin position="353"/>
        <end position="374"/>
    </location>
</feature>
<feature type="repeat" description="LRR 14">
    <location>
        <begin position="376"/>
        <end position="397"/>
    </location>
</feature>
<feature type="repeat" description="LRR 15">
    <location>
        <begin position="399"/>
        <end position="420"/>
    </location>
</feature>
<feature type="repeat" description="LRR 16">
    <location>
        <begin position="422"/>
        <end position="443"/>
    </location>
</feature>
<feature type="repeat" description="LRR 17">
    <location>
        <begin position="445"/>
        <end position="466"/>
    </location>
</feature>
<feature type="repeat" description="LRR 18">
    <location>
        <begin position="468"/>
        <end position="489"/>
    </location>
</feature>
<feature type="repeat" description="LRR 19">
    <location>
        <begin position="491"/>
        <end position="513"/>
    </location>
</feature>
<feature type="repeat" description="LRR 20">
    <location>
        <begin position="515"/>
        <end position="536"/>
    </location>
</feature>
<feature type="region of interest" description="Disordered" evidence="2">
    <location>
        <begin position="1"/>
        <end position="55"/>
    </location>
</feature>
<feature type="compositionally biased region" description="Basic and acidic residues" evidence="2">
    <location>
        <begin position="1"/>
        <end position="17"/>
    </location>
</feature>
<name>SHOC2_CAEBR</name>
<dbReference type="EMBL" id="HE601481">
    <property type="protein sequence ID" value="CAP37133.1"/>
    <property type="molecule type" value="Genomic_DNA"/>
</dbReference>
<dbReference type="SMR" id="A8XWW4"/>
<dbReference type="FunCoup" id="A8XWW4">
    <property type="interactions" value="1"/>
</dbReference>
<dbReference type="STRING" id="6238.A8XWW4"/>
<dbReference type="EnsemblMetazoa" id="CBG19995b.1">
    <property type="protein sequence ID" value="CBG19995b.1"/>
    <property type="gene ID" value="WBGene00039104"/>
</dbReference>
<dbReference type="KEGG" id="cbr:CBG_19995"/>
<dbReference type="CTD" id="8575921"/>
<dbReference type="WormBase" id="CBG19995a">
    <property type="protein sequence ID" value="CBP39480"/>
    <property type="gene ID" value="WBGene00039104"/>
    <property type="gene designation" value="Cbr-soc-2"/>
</dbReference>
<dbReference type="eggNOG" id="KOG0619">
    <property type="taxonomic scope" value="Eukaryota"/>
</dbReference>
<dbReference type="HOGENOM" id="CLU_000288_18_23_1"/>
<dbReference type="InParanoid" id="A8XWW4"/>
<dbReference type="OMA" id="NQFTSYP"/>
<dbReference type="OrthoDB" id="676979at2759"/>
<dbReference type="Proteomes" id="UP000008549">
    <property type="component" value="Unassembled WGS sequence"/>
</dbReference>
<dbReference type="GO" id="GO:0005225">
    <property type="term" value="F:volume-sensitive anion channel activity"/>
    <property type="evidence" value="ECO:0000318"/>
    <property type="project" value="GO_Central"/>
</dbReference>
<dbReference type="GO" id="GO:0035556">
    <property type="term" value="P:intracellular signal transduction"/>
    <property type="evidence" value="ECO:0000318"/>
    <property type="project" value="GO_Central"/>
</dbReference>
<dbReference type="FunFam" id="3.80.10.10:FF:000031">
    <property type="entry name" value="leucine-rich repeat protein SHOC-2"/>
    <property type="match status" value="1"/>
</dbReference>
<dbReference type="FunFam" id="3.80.10.10:FF:000281">
    <property type="entry name" value="Leucine-rich repeat protein soc-2"/>
    <property type="match status" value="1"/>
</dbReference>
<dbReference type="FunFam" id="3.80.10.10:FF:001085">
    <property type="entry name" value="Leucine-rich repeat protein soc-2"/>
    <property type="match status" value="1"/>
</dbReference>
<dbReference type="Gene3D" id="3.80.10.10">
    <property type="entry name" value="Ribonuclease Inhibitor"/>
    <property type="match status" value="4"/>
</dbReference>
<dbReference type="InterPro" id="IPR001611">
    <property type="entry name" value="Leu-rich_rpt"/>
</dbReference>
<dbReference type="InterPro" id="IPR003591">
    <property type="entry name" value="Leu-rich_rpt_typical-subtyp"/>
</dbReference>
<dbReference type="InterPro" id="IPR032675">
    <property type="entry name" value="LRR_dom_sf"/>
</dbReference>
<dbReference type="InterPro" id="IPR050216">
    <property type="entry name" value="LRR_domain-containing"/>
</dbReference>
<dbReference type="InterPro" id="IPR055414">
    <property type="entry name" value="LRR_R13L4/SHOC2-like"/>
</dbReference>
<dbReference type="PANTHER" id="PTHR48051">
    <property type="match status" value="1"/>
</dbReference>
<dbReference type="PANTHER" id="PTHR48051:SF39">
    <property type="entry name" value="P53-INDUCED DEATH DOMAIN PROTEIN 1"/>
    <property type="match status" value="1"/>
</dbReference>
<dbReference type="Pfam" id="PF00560">
    <property type="entry name" value="LRR_1"/>
    <property type="match status" value="1"/>
</dbReference>
<dbReference type="Pfam" id="PF23598">
    <property type="entry name" value="LRR_14"/>
    <property type="match status" value="1"/>
</dbReference>
<dbReference type="Pfam" id="PF13855">
    <property type="entry name" value="LRR_8"/>
    <property type="match status" value="2"/>
</dbReference>
<dbReference type="SMART" id="SM00364">
    <property type="entry name" value="LRR_BAC"/>
    <property type="match status" value="15"/>
</dbReference>
<dbReference type="SMART" id="SM00365">
    <property type="entry name" value="LRR_SD22"/>
    <property type="match status" value="8"/>
</dbReference>
<dbReference type="SMART" id="SM00369">
    <property type="entry name" value="LRR_TYP"/>
    <property type="match status" value="17"/>
</dbReference>
<dbReference type="SUPFAM" id="SSF52058">
    <property type="entry name" value="L domain-like"/>
    <property type="match status" value="2"/>
</dbReference>
<dbReference type="PROSITE" id="PS51450">
    <property type="entry name" value="LRR"/>
    <property type="match status" value="17"/>
</dbReference>
<accession>A8XWW4</accession>
<comment type="function">
    <text evidence="1">Acts as a Ras effector and participates in MAPK pathway activation. Probably acts as a scaffolding protein in a protein phosphatase complex that specifically dephosphorylates Raf kinase and stimulates Raf activity at specialized signaling complexes upon Ras activation. Required for vulval development. Involved in fluid homeostasis. Plays a role in nicotinic acetylcholine receptor (nAChR)-mediated sensitivity to nicotine.</text>
</comment>
<comment type="subunit">
    <text evidence="1">Interacts with let-60.</text>
</comment>
<comment type="similarity">
    <text evidence="3">Belongs to the SHOC2 family.</text>
</comment>
<evidence type="ECO:0000250" key="1">
    <source>
        <dbReference type="UniProtKB" id="Q22875"/>
    </source>
</evidence>
<evidence type="ECO:0000256" key="2">
    <source>
        <dbReference type="SAM" id="MobiDB-lite"/>
    </source>
</evidence>
<evidence type="ECO:0000305" key="3"/>
<proteinExistence type="inferred from homology"/>
<gene>
    <name type="primary">soc-2</name>
    <name type="synonym">sur-8</name>
    <name type="ORF">CBG19995</name>
</gene>
<sequence length="559" mass="62523">METSKEFEFRPAKETSRSKSPGGIVGRLSNFARNKARHSLSEKGSNSVGGSGGSGFDKPRKDLLKEFHKCKEAQDQRLDLSSIEITSIPSPIKELTQLTELFLYKNKLTCLPTEIGQLVNLKKLGLSENALSSLPDSLSSLESLETLDLRHNKLTEVPAVIYKITSLETLWLRYNRIVAVDEQIGNLQKLKMLDVRENKIRELPSAIGKLSSLVVCLVSYNHLTRVPEEIGECHALTQLDLQHNDLSELPYSIGKLTNLVRIGIRYNKIRCIPSELESCQQLEEFIVESNHLQLLPPNLLTMLPKIHTVNLSRNELTAFPAGGPQQFVPTVTINMEHNQISKIPIGIFSKATRLTKLNLKENELVSLPLDMGSWTSITELNLSTNQLKVLPEDIEKLVNLEILVLSNNQLKKLPNQIGNLKKLRELDLEENELETVPTEIGFLQHLTKLWVQSNKIVTLPRSIGNLCSLQDLRLGENNLTAIPEEIGHLDSLKSLYLNDNSSLHNLPFELALCQSLEIMSIENSPLSQIPPEITAGGPSLVIQYLKMQGPYRGVVMTGQ</sequence>
<reference key="1">
    <citation type="journal article" date="2003" name="PLoS Biol.">
        <title>The genome sequence of Caenorhabditis briggsae: a platform for comparative genomics.</title>
        <authorList>
            <person name="Stein L.D."/>
            <person name="Bao Z."/>
            <person name="Blasiar D."/>
            <person name="Blumenthal T."/>
            <person name="Brent M.R."/>
            <person name="Chen N."/>
            <person name="Chinwalla A."/>
            <person name="Clarke L."/>
            <person name="Clee C."/>
            <person name="Coghlan A."/>
            <person name="Coulson A."/>
            <person name="D'Eustachio P."/>
            <person name="Fitch D.H.A."/>
            <person name="Fulton L.A."/>
            <person name="Fulton R.E."/>
            <person name="Griffiths-Jones S."/>
            <person name="Harris T.W."/>
            <person name="Hillier L.W."/>
            <person name="Kamath R."/>
            <person name="Kuwabara P.E."/>
            <person name="Mardis E.R."/>
            <person name="Marra M.A."/>
            <person name="Miner T.L."/>
            <person name="Minx P."/>
            <person name="Mullikin J.C."/>
            <person name="Plumb R.W."/>
            <person name="Rogers J."/>
            <person name="Schein J.E."/>
            <person name="Sohrmann M."/>
            <person name="Spieth J."/>
            <person name="Stajich J.E."/>
            <person name="Wei C."/>
            <person name="Willey D."/>
            <person name="Wilson R.K."/>
            <person name="Durbin R.M."/>
            <person name="Waterston R.H."/>
        </authorList>
    </citation>
    <scope>NUCLEOTIDE SEQUENCE [LARGE SCALE GENOMIC DNA]</scope>
    <source>
        <strain>AF16</strain>
    </source>
</reference>
<protein>
    <recommendedName>
        <fullName>Leucine-rich repeat protein soc-2</fullName>
    </recommendedName>
    <alternativeName>
        <fullName>Suppressor of Clr protein 2</fullName>
    </alternativeName>
    <alternativeName>
        <fullName>Suppressor of activated let-60 Ras protein 8</fullName>
    </alternativeName>
</protein>
<keyword id="KW-0433">Leucine-rich repeat</keyword>
<keyword id="KW-1185">Reference proteome</keyword>
<keyword id="KW-0677">Repeat</keyword>
<organism>
    <name type="scientific">Caenorhabditis briggsae</name>
    <dbReference type="NCBI Taxonomy" id="6238"/>
    <lineage>
        <taxon>Eukaryota</taxon>
        <taxon>Metazoa</taxon>
        <taxon>Ecdysozoa</taxon>
        <taxon>Nematoda</taxon>
        <taxon>Chromadorea</taxon>
        <taxon>Rhabditida</taxon>
        <taxon>Rhabditina</taxon>
        <taxon>Rhabditomorpha</taxon>
        <taxon>Rhabditoidea</taxon>
        <taxon>Rhabditidae</taxon>
        <taxon>Peloderinae</taxon>
        <taxon>Caenorhabditis</taxon>
    </lineage>
</organism>